<evidence type="ECO:0000255" key="1">
    <source>
        <dbReference type="HAMAP-Rule" id="MF_03002"/>
    </source>
</evidence>
<evidence type="ECO:0000255" key="2">
    <source>
        <dbReference type="PROSITE-ProRule" id="PRU01185"/>
    </source>
</evidence>
<evidence type="ECO:0000256" key="3">
    <source>
        <dbReference type="SAM" id="MobiDB-lite"/>
    </source>
</evidence>
<name>EIF3C_DROAN</name>
<comment type="function">
    <text evidence="1">Component of the eukaryotic translation initiation factor 3 (eIF-3) complex, which is involved in protein synthesis of a specialized repertoire of mRNAs and, together with other initiation factors, stimulates binding of mRNA and methionyl-tRNAi to the 40S ribosome. The eIF-3 complex specifically targets and initiates translation of a subset of mRNAs involved in cell proliferation.</text>
</comment>
<comment type="subunit">
    <text evidence="1">Component of the eukaryotic translation initiation factor 3 (eIF-3) complex. The eIF-3 complex interacts with pix.</text>
</comment>
<comment type="subcellular location">
    <subcellularLocation>
        <location evidence="1">Cytoplasm</location>
    </subcellularLocation>
</comment>
<comment type="similarity">
    <text evidence="1">Belongs to the eIF-3 subunit C family.</text>
</comment>
<proteinExistence type="inferred from homology"/>
<feature type="chain" id="PRO_0000365385" description="Eukaryotic translation initiation factor 3 subunit C">
    <location>
        <begin position="1"/>
        <end position="906"/>
    </location>
</feature>
<feature type="domain" description="PCI" evidence="2">
    <location>
        <begin position="641"/>
        <end position="817"/>
    </location>
</feature>
<feature type="region of interest" description="Disordered" evidence="3">
    <location>
        <begin position="1"/>
        <end position="22"/>
    </location>
</feature>
<feature type="region of interest" description="Disordered" evidence="3">
    <location>
        <begin position="158"/>
        <end position="283"/>
    </location>
</feature>
<feature type="region of interest" description="Disordered" evidence="3">
    <location>
        <begin position="853"/>
        <end position="873"/>
    </location>
</feature>
<feature type="region of interest" description="Disordered" evidence="3">
    <location>
        <begin position="887"/>
        <end position="906"/>
    </location>
</feature>
<feature type="compositionally biased region" description="Acidic residues" evidence="3">
    <location>
        <begin position="11"/>
        <end position="20"/>
    </location>
</feature>
<feature type="compositionally biased region" description="Acidic residues" evidence="3">
    <location>
        <begin position="162"/>
        <end position="186"/>
    </location>
</feature>
<feature type="compositionally biased region" description="Low complexity" evidence="3">
    <location>
        <begin position="195"/>
        <end position="209"/>
    </location>
</feature>
<feature type="compositionally biased region" description="Acidic residues" evidence="3">
    <location>
        <begin position="211"/>
        <end position="237"/>
    </location>
</feature>
<feature type="compositionally biased region" description="Basic and acidic residues" evidence="3">
    <location>
        <begin position="242"/>
        <end position="270"/>
    </location>
</feature>
<feature type="compositionally biased region" description="Low complexity" evidence="3">
    <location>
        <begin position="894"/>
        <end position="906"/>
    </location>
</feature>
<feature type="modified residue" description="Phosphoserine" evidence="1">
    <location>
        <position position="34"/>
    </location>
</feature>
<feature type="modified residue" description="Phosphoserine" evidence="1">
    <location>
        <position position="165"/>
    </location>
</feature>
<feature type="modified residue" description="Phosphoserine" evidence="1">
    <location>
        <position position="176"/>
    </location>
</feature>
<feature type="modified residue" description="Phosphoserine" evidence="1">
    <location>
        <position position="185"/>
    </location>
</feature>
<accession>B3MIF1</accession>
<dbReference type="EMBL" id="CH902619">
    <property type="protein sequence ID" value="EDV36999.1"/>
    <property type="molecule type" value="Genomic_DNA"/>
</dbReference>
<dbReference type="RefSeq" id="XP_001960177.1">
    <property type="nucleotide sequence ID" value="XM_001960141.2"/>
</dbReference>
<dbReference type="SMR" id="B3MIF1"/>
<dbReference type="FunCoup" id="B3MIF1">
    <property type="interactions" value="1968"/>
</dbReference>
<dbReference type="STRING" id="7217.B3MIF1"/>
<dbReference type="EnsemblMetazoa" id="FBtr0116358">
    <property type="protein sequence ID" value="FBpp0114850"/>
    <property type="gene ID" value="FBgn0088698"/>
</dbReference>
<dbReference type="EnsemblMetazoa" id="FBtr0387564">
    <property type="protein sequence ID" value="FBpp0347336"/>
    <property type="gene ID" value="FBgn0088698"/>
</dbReference>
<dbReference type="EnsemblMetazoa" id="XM_014907337.3">
    <property type="protein sequence ID" value="XP_014762823.1"/>
    <property type="gene ID" value="LOC6494522"/>
</dbReference>
<dbReference type="GeneID" id="6494522"/>
<dbReference type="KEGG" id="dan:6494522"/>
<dbReference type="CTD" id="8663"/>
<dbReference type="eggNOG" id="KOG1076">
    <property type="taxonomic scope" value="Eukaryota"/>
</dbReference>
<dbReference type="HOGENOM" id="CLU_004304_0_0_1"/>
<dbReference type="InParanoid" id="B3MIF1"/>
<dbReference type="OMA" id="FRCGLIK"/>
<dbReference type="OrthoDB" id="29647at2759"/>
<dbReference type="PhylomeDB" id="B3MIF1"/>
<dbReference type="ChiTaRS" id="eIF3-S8">
    <property type="organism name" value="fly"/>
</dbReference>
<dbReference type="Proteomes" id="UP000007801">
    <property type="component" value="Unassembled WGS sequence"/>
</dbReference>
<dbReference type="GO" id="GO:0016282">
    <property type="term" value="C:eukaryotic 43S preinitiation complex"/>
    <property type="evidence" value="ECO:0007669"/>
    <property type="project" value="UniProtKB-UniRule"/>
</dbReference>
<dbReference type="GO" id="GO:0033290">
    <property type="term" value="C:eukaryotic 48S preinitiation complex"/>
    <property type="evidence" value="ECO:0007669"/>
    <property type="project" value="UniProtKB-UniRule"/>
</dbReference>
<dbReference type="GO" id="GO:0005852">
    <property type="term" value="C:eukaryotic translation initiation factor 3 complex"/>
    <property type="evidence" value="ECO:0007669"/>
    <property type="project" value="UniProtKB-UniRule"/>
</dbReference>
<dbReference type="GO" id="GO:0003723">
    <property type="term" value="F:RNA binding"/>
    <property type="evidence" value="ECO:0007669"/>
    <property type="project" value="InterPro"/>
</dbReference>
<dbReference type="GO" id="GO:0003743">
    <property type="term" value="F:translation initiation factor activity"/>
    <property type="evidence" value="ECO:0007669"/>
    <property type="project" value="UniProtKB-UniRule"/>
</dbReference>
<dbReference type="GO" id="GO:0031369">
    <property type="term" value="F:translation initiation factor binding"/>
    <property type="evidence" value="ECO:0007669"/>
    <property type="project" value="InterPro"/>
</dbReference>
<dbReference type="GO" id="GO:0001732">
    <property type="term" value="P:formation of cytoplasmic translation initiation complex"/>
    <property type="evidence" value="ECO:0007669"/>
    <property type="project" value="UniProtKB-UniRule"/>
</dbReference>
<dbReference type="FunFam" id="1.10.10.10:FF:000300">
    <property type="entry name" value="Eukaryotic translation initiation factor 3 subunit C"/>
    <property type="match status" value="1"/>
</dbReference>
<dbReference type="Gene3D" id="1.25.40.570">
    <property type="match status" value="1"/>
</dbReference>
<dbReference type="HAMAP" id="MF_03002">
    <property type="entry name" value="eIF3c"/>
    <property type="match status" value="1"/>
</dbReference>
<dbReference type="InterPro" id="IPR027516">
    <property type="entry name" value="EIF3C"/>
</dbReference>
<dbReference type="InterPro" id="IPR008905">
    <property type="entry name" value="EIF3C_N_dom"/>
</dbReference>
<dbReference type="InterPro" id="IPR000717">
    <property type="entry name" value="PCI_dom"/>
</dbReference>
<dbReference type="InterPro" id="IPR036390">
    <property type="entry name" value="WH_DNA-bd_sf"/>
</dbReference>
<dbReference type="PANTHER" id="PTHR13937">
    <property type="entry name" value="EUKARYOTIC TRANSLATION INITATION FACTOR 3, SUBUNIT 8 EIF3S8 -RELATED"/>
    <property type="match status" value="1"/>
</dbReference>
<dbReference type="PANTHER" id="PTHR13937:SF0">
    <property type="entry name" value="EUKARYOTIC TRANSLATION INITIATION FACTOR 3 SUBUNIT C-RELATED"/>
    <property type="match status" value="1"/>
</dbReference>
<dbReference type="Pfam" id="PF05470">
    <property type="entry name" value="eIF-3c_N"/>
    <property type="match status" value="1"/>
</dbReference>
<dbReference type="Pfam" id="PF01399">
    <property type="entry name" value="PCI"/>
    <property type="match status" value="1"/>
</dbReference>
<dbReference type="SMART" id="SM00088">
    <property type="entry name" value="PINT"/>
    <property type="match status" value="1"/>
</dbReference>
<dbReference type="SUPFAM" id="SSF46785">
    <property type="entry name" value="Winged helix' DNA-binding domain"/>
    <property type="match status" value="1"/>
</dbReference>
<dbReference type="PROSITE" id="PS50250">
    <property type="entry name" value="PCI"/>
    <property type="match status" value="1"/>
</dbReference>
<protein>
    <recommendedName>
        <fullName evidence="1">Eukaryotic translation initiation factor 3 subunit C</fullName>
        <shortName evidence="1">eIF3c</shortName>
    </recommendedName>
    <alternativeName>
        <fullName evidence="1">Eukaryotic translation initiation factor 3 subunit 8</fullName>
    </alternativeName>
</protein>
<reference key="1">
    <citation type="journal article" date="2007" name="Nature">
        <title>Evolution of genes and genomes on the Drosophila phylogeny.</title>
        <authorList>
            <consortium name="Drosophila 12 genomes consortium"/>
        </authorList>
    </citation>
    <scope>NUCLEOTIDE SEQUENCE [LARGE SCALE GENOMIC DNA]</scope>
    <source>
        <strain>Tucson 14024-0371.13</strain>
    </source>
</reference>
<sequence length="906" mass="105434">MSRFFANGSDSESESSEEEVQATNFNKASAFQFSDDEEEVKRVVRSTKEKRYENLTNIIKTIRNHKKIKDIPNTLSSFEDLTKAYTKALPVISKEENGITPRFYIRCLAELEDFINEVWEDREGRKNLSKNNSKSLGTLRQKVRKYIKDFEDDLSRFREAPDQESEAEDEEAAQDSDGGDAGDDSDAGIKREPAEAAPKVAKTVPAKAAPADDDDSDDSIDWDSDSETETESSDDENQYQNMRERFLKRTTEKEEKDDDKRKDKRKEQKIKIRKRPEDDEDGEWETVVKGHVVEKPKMFEKDAEIDIPLVLAKLVEIMSARGKKRTDRRLQIDLLFELRDISDQHNLGTAVSVKIHFNIISAIFDYNQKISEPMKLEHWALLLEVMQSMLKLLLVNPDIHMSESVAEEHEELATSPFYVRGCPLAAVERLDDEFTKLLKECDPHSNDYVSRLKDEVNVVKTIELVLQYFENDGNNNERCRIYLRKIEHLYYKFDPEVLKKKRGEIPQNTQTSVDVMDRLCKFIYAKDDTDRIRTRAILAHIYHHAMHDNWFQARDLVLMSHLQDNIDAADPATRILYNRMMANLGLCAFRQENIKDAHHCLVDLMVTGKPKELLAQGLLPQRQHERSAEQEKIEKQRQMPFHMHINLELLECVYLVSAMLLEIPYIAAHEFDARRRMISKTFYQQLRSSERQSLVGPPESMREHVVAAAKAMRCGNWQACANFIVNKKMNTKVWDLFYESDRVREMLTKFIKEESLRTYLFTYSNVYTSISIPSLAQMYELPVQKVHSIISKMIINEELMASLDDPTETVVMHRSEPSRLQALAMQFVDKVTNLVDVNEKVFDMKQGNFFQRGNMGNRGDRGYNRNQDGNWGGQLRDIKRIRGQRIQRGRKHQQQQQQQVQTIDEE</sequence>
<keyword id="KW-0963">Cytoplasm</keyword>
<keyword id="KW-0396">Initiation factor</keyword>
<keyword id="KW-0597">Phosphoprotein</keyword>
<keyword id="KW-0648">Protein biosynthesis</keyword>
<keyword id="KW-1185">Reference proteome</keyword>
<organism>
    <name type="scientific">Drosophila ananassae</name>
    <name type="common">Fruit fly</name>
    <dbReference type="NCBI Taxonomy" id="7217"/>
    <lineage>
        <taxon>Eukaryota</taxon>
        <taxon>Metazoa</taxon>
        <taxon>Ecdysozoa</taxon>
        <taxon>Arthropoda</taxon>
        <taxon>Hexapoda</taxon>
        <taxon>Insecta</taxon>
        <taxon>Pterygota</taxon>
        <taxon>Neoptera</taxon>
        <taxon>Endopterygota</taxon>
        <taxon>Diptera</taxon>
        <taxon>Brachycera</taxon>
        <taxon>Muscomorpha</taxon>
        <taxon>Ephydroidea</taxon>
        <taxon>Drosophilidae</taxon>
        <taxon>Drosophila</taxon>
        <taxon>Sophophora</taxon>
    </lineage>
</organism>
<gene>
    <name evidence="1" type="primary">eIF3c</name>
    <name evidence="1" type="synonym">eIF3-S8</name>
    <name type="ORF">GF11658</name>
</gene>